<accession>P47529</accession>
<name>ACPH_MYCGE</name>
<gene>
    <name type="ordered locus">MG287</name>
</gene>
<proteinExistence type="inferred from homology"/>
<feature type="chain" id="PRO_0000180265" description="Acyl carrier protein homolog">
    <location>
        <begin position="1"/>
        <end position="84"/>
    </location>
</feature>
<feature type="domain" description="Carrier" evidence="2">
    <location>
        <begin position="4"/>
        <end position="79"/>
    </location>
</feature>
<feature type="modified residue" description="O-(pantetheine 4'-phosphoryl)serine" evidence="2">
    <location>
        <position position="39"/>
    </location>
</feature>
<organism>
    <name type="scientific">Mycoplasma genitalium (strain ATCC 33530 / DSM 19775 / NCTC 10195 / G37)</name>
    <name type="common">Mycoplasmoides genitalium</name>
    <dbReference type="NCBI Taxonomy" id="243273"/>
    <lineage>
        <taxon>Bacteria</taxon>
        <taxon>Bacillati</taxon>
        <taxon>Mycoplasmatota</taxon>
        <taxon>Mycoplasmoidales</taxon>
        <taxon>Mycoplasmoidaceae</taxon>
        <taxon>Mycoplasmoides</taxon>
    </lineage>
</organism>
<comment type="function">
    <text evidence="1">Carrier of the growing fatty acid chain in fatty acid biosynthesis.</text>
</comment>
<comment type="pathway">
    <text>Lipid metabolism; fatty acid biosynthesis.</text>
</comment>
<comment type="PTM">
    <text evidence="3">4'-phosphopantetheine is transferred from CoA to a specific serine of the apo-ACP-like protein.</text>
</comment>
<protein>
    <recommendedName>
        <fullName>Acyl carrier protein homolog</fullName>
        <shortName>ACP</shortName>
    </recommendedName>
</protein>
<sequence>MQTHEILLKIKEIAKSKNFNLNLDEKTINQPLRELKIDSLDMFSIVVSLENEFGISFDDEKLMNLKNLADLVLEVKNLLAKKGV</sequence>
<keyword id="KW-0275">Fatty acid biosynthesis</keyword>
<keyword id="KW-0276">Fatty acid metabolism</keyword>
<keyword id="KW-0444">Lipid biosynthesis</keyword>
<keyword id="KW-0443">Lipid metabolism</keyword>
<keyword id="KW-0596">Phosphopantetheine</keyword>
<keyword id="KW-0597">Phosphoprotein</keyword>
<keyword id="KW-1185">Reference proteome</keyword>
<reference key="1">
    <citation type="journal article" date="1995" name="Science">
        <title>The minimal gene complement of Mycoplasma genitalium.</title>
        <authorList>
            <person name="Fraser C.M."/>
            <person name="Gocayne J.D."/>
            <person name="White O."/>
            <person name="Adams M.D."/>
            <person name="Clayton R.A."/>
            <person name="Fleischmann R.D."/>
            <person name="Bult C.J."/>
            <person name="Kerlavage A.R."/>
            <person name="Sutton G.G."/>
            <person name="Kelley J.M."/>
            <person name="Fritchman J.L."/>
            <person name="Weidman J.F."/>
            <person name="Small K.V."/>
            <person name="Sandusky M."/>
            <person name="Fuhrmann J.L."/>
            <person name="Nguyen D.T."/>
            <person name="Utterback T.R."/>
            <person name="Saudek D.M."/>
            <person name="Phillips C.A."/>
            <person name="Merrick J.M."/>
            <person name="Tomb J.-F."/>
            <person name="Dougherty B.A."/>
            <person name="Bott K.F."/>
            <person name="Hu P.-C."/>
            <person name="Lucier T.S."/>
            <person name="Peterson S.N."/>
            <person name="Smith H.O."/>
            <person name="Hutchison C.A. III"/>
            <person name="Venter J.C."/>
        </authorList>
    </citation>
    <scope>NUCLEOTIDE SEQUENCE [LARGE SCALE GENOMIC DNA]</scope>
    <source>
        <strain>ATCC 33530 / DSM 19775 / NCTC 10195 / G37</strain>
    </source>
</reference>
<dbReference type="EMBL" id="L43967">
    <property type="protein sequence ID" value="AAC71509.1"/>
    <property type="molecule type" value="Genomic_DNA"/>
</dbReference>
<dbReference type="PIR" id="G64231">
    <property type="entry name" value="G64231"/>
</dbReference>
<dbReference type="RefSeq" id="WP_009885999.1">
    <property type="nucleotide sequence ID" value="NC_000908.2"/>
</dbReference>
<dbReference type="SMR" id="P47529"/>
<dbReference type="STRING" id="243273.MG_287"/>
<dbReference type="GeneID" id="88282660"/>
<dbReference type="KEGG" id="mge:MG_287"/>
<dbReference type="eggNOG" id="COG0236">
    <property type="taxonomic scope" value="Bacteria"/>
</dbReference>
<dbReference type="HOGENOM" id="CLU_108696_15_0_14"/>
<dbReference type="InParanoid" id="P47529"/>
<dbReference type="OrthoDB" id="400140at2"/>
<dbReference type="UniPathway" id="UPA00094"/>
<dbReference type="Proteomes" id="UP000000807">
    <property type="component" value="Chromosome"/>
</dbReference>
<dbReference type="GO" id="GO:0005829">
    <property type="term" value="C:cytosol"/>
    <property type="evidence" value="ECO:0000318"/>
    <property type="project" value="GO_Central"/>
</dbReference>
<dbReference type="GO" id="GO:0016020">
    <property type="term" value="C:membrane"/>
    <property type="evidence" value="ECO:0007669"/>
    <property type="project" value="GOC"/>
</dbReference>
<dbReference type="GO" id="GO:0000035">
    <property type="term" value="F:acyl binding"/>
    <property type="evidence" value="ECO:0000318"/>
    <property type="project" value="GO_Central"/>
</dbReference>
<dbReference type="GO" id="GO:0000036">
    <property type="term" value="F:acyl carrier activity"/>
    <property type="evidence" value="ECO:0000318"/>
    <property type="project" value="GO_Central"/>
</dbReference>
<dbReference type="GO" id="GO:0009245">
    <property type="term" value="P:lipid A biosynthetic process"/>
    <property type="evidence" value="ECO:0000318"/>
    <property type="project" value="GO_Central"/>
</dbReference>
<dbReference type="Gene3D" id="1.10.1200.10">
    <property type="entry name" value="ACP-like"/>
    <property type="match status" value="1"/>
</dbReference>
<dbReference type="InterPro" id="IPR036736">
    <property type="entry name" value="ACP-like_sf"/>
</dbReference>
<dbReference type="InterPro" id="IPR009081">
    <property type="entry name" value="PP-bd_ACP"/>
</dbReference>
<dbReference type="Pfam" id="PF00550">
    <property type="entry name" value="PP-binding"/>
    <property type="match status" value="1"/>
</dbReference>
<dbReference type="SUPFAM" id="SSF47336">
    <property type="entry name" value="ACP-like"/>
    <property type="match status" value="1"/>
</dbReference>
<dbReference type="PROSITE" id="PS50075">
    <property type="entry name" value="CARRIER"/>
    <property type="match status" value="1"/>
</dbReference>
<evidence type="ECO:0000250" key="1"/>
<evidence type="ECO:0000255" key="2">
    <source>
        <dbReference type="PROSITE-ProRule" id="PRU00258"/>
    </source>
</evidence>
<evidence type="ECO:0000305" key="3"/>